<evidence type="ECO:0000255" key="1">
    <source>
        <dbReference type="HAMAP-Rule" id="MF_01201"/>
    </source>
</evidence>
<gene>
    <name type="primary">alr</name>
    <name type="ordered locus">LCABL_27280</name>
</gene>
<comment type="function">
    <text evidence="1">Catalyzes the interconversion of L-alanine and D-alanine. May also act on other amino acids.</text>
</comment>
<comment type="catalytic activity">
    <reaction evidence="1">
        <text>L-alanine = D-alanine</text>
        <dbReference type="Rhea" id="RHEA:20249"/>
        <dbReference type="ChEBI" id="CHEBI:57416"/>
        <dbReference type="ChEBI" id="CHEBI:57972"/>
        <dbReference type="EC" id="5.1.1.1"/>
    </reaction>
</comment>
<comment type="cofactor">
    <cofactor evidence="1">
        <name>pyridoxal 5'-phosphate</name>
        <dbReference type="ChEBI" id="CHEBI:597326"/>
    </cofactor>
</comment>
<comment type="pathway">
    <text evidence="1">Amino-acid biosynthesis; D-alanine biosynthesis; D-alanine from L-alanine: step 1/1.</text>
</comment>
<comment type="similarity">
    <text evidence="1">Belongs to the alanine racemase family.</text>
</comment>
<name>ALR_LACCB</name>
<reference key="1">
    <citation type="submission" date="2008-06" db="EMBL/GenBank/DDBJ databases">
        <title>Lactobacillus casei BL23 complete genome sequence.</title>
        <authorList>
            <person name="Maze A."/>
            <person name="Boel G."/>
            <person name="Bourand A."/>
            <person name="Loux V."/>
            <person name="Gibrat J.F."/>
            <person name="Zuniga M."/>
            <person name="Hartke A."/>
            <person name="Deutscher J."/>
        </authorList>
    </citation>
    <scope>NUCLEOTIDE SEQUENCE [LARGE SCALE GENOMIC DNA]</scope>
    <source>
        <strain>BL23</strain>
    </source>
</reference>
<keyword id="KW-0413">Isomerase</keyword>
<keyword id="KW-0663">Pyridoxal phosphate</keyword>
<proteinExistence type="inferred from homology"/>
<accession>B3WAR0</accession>
<organism>
    <name type="scientific">Lacticaseibacillus casei (strain BL23)</name>
    <name type="common">Lactobacillus casei</name>
    <dbReference type="NCBI Taxonomy" id="543734"/>
    <lineage>
        <taxon>Bacteria</taxon>
        <taxon>Bacillati</taxon>
        <taxon>Bacillota</taxon>
        <taxon>Bacilli</taxon>
        <taxon>Lactobacillales</taxon>
        <taxon>Lactobacillaceae</taxon>
        <taxon>Lacticaseibacillus</taxon>
    </lineage>
</organism>
<protein>
    <recommendedName>
        <fullName evidence="1">Alanine racemase</fullName>
        <ecNumber evidence="1">5.1.1.1</ecNumber>
    </recommendedName>
</protein>
<dbReference type="EC" id="5.1.1.1" evidence="1"/>
<dbReference type="EMBL" id="FM177140">
    <property type="protein sequence ID" value="CAQ67779.1"/>
    <property type="molecule type" value="Genomic_DNA"/>
</dbReference>
<dbReference type="SMR" id="B3WAR0"/>
<dbReference type="KEGG" id="lcb:LCABL_27280"/>
<dbReference type="HOGENOM" id="CLU_028393_2_1_9"/>
<dbReference type="UniPathway" id="UPA00042">
    <property type="reaction ID" value="UER00497"/>
</dbReference>
<dbReference type="GO" id="GO:0005829">
    <property type="term" value="C:cytosol"/>
    <property type="evidence" value="ECO:0007669"/>
    <property type="project" value="TreeGrafter"/>
</dbReference>
<dbReference type="GO" id="GO:0008784">
    <property type="term" value="F:alanine racemase activity"/>
    <property type="evidence" value="ECO:0007669"/>
    <property type="project" value="UniProtKB-UniRule"/>
</dbReference>
<dbReference type="GO" id="GO:0030170">
    <property type="term" value="F:pyridoxal phosphate binding"/>
    <property type="evidence" value="ECO:0007669"/>
    <property type="project" value="UniProtKB-UniRule"/>
</dbReference>
<dbReference type="GO" id="GO:0030632">
    <property type="term" value="P:D-alanine biosynthetic process"/>
    <property type="evidence" value="ECO:0007669"/>
    <property type="project" value="UniProtKB-UniRule"/>
</dbReference>
<dbReference type="GO" id="GO:0009252">
    <property type="term" value="P:peptidoglycan biosynthetic process"/>
    <property type="evidence" value="ECO:0007669"/>
    <property type="project" value="TreeGrafter"/>
</dbReference>
<dbReference type="CDD" id="cd00430">
    <property type="entry name" value="PLPDE_III_AR"/>
    <property type="match status" value="1"/>
</dbReference>
<dbReference type="FunFam" id="2.40.37.10:FF:000006">
    <property type="entry name" value="Alanine racemase"/>
    <property type="match status" value="1"/>
</dbReference>
<dbReference type="FunFam" id="3.20.20.10:FF:000002">
    <property type="entry name" value="Alanine racemase"/>
    <property type="match status" value="1"/>
</dbReference>
<dbReference type="Gene3D" id="3.20.20.10">
    <property type="entry name" value="Alanine racemase"/>
    <property type="match status" value="1"/>
</dbReference>
<dbReference type="Gene3D" id="2.40.37.10">
    <property type="entry name" value="Lyase, Ornithine Decarboxylase, Chain A, domain 1"/>
    <property type="match status" value="1"/>
</dbReference>
<dbReference type="HAMAP" id="MF_01201">
    <property type="entry name" value="Ala_racemase"/>
    <property type="match status" value="1"/>
</dbReference>
<dbReference type="InterPro" id="IPR000821">
    <property type="entry name" value="Ala_racemase"/>
</dbReference>
<dbReference type="InterPro" id="IPR009006">
    <property type="entry name" value="Ala_racemase/Decarboxylase_C"/>
</dbReference>
<dbReference type="InterPro" id="IPR011079">
    <property type="entry name" value="Ala_racemase_C"/>
</dbReference>
<dbReference type="InterPro" id="IPR001608">
    <property type="entry name" value="Ala_racemase_N"/>
</dbReference>
<dbReference type="InterPro" id="IPR020622">
    <property type="entry name" value="Ala_racemase_pyridoxalP-BS"/>
</dbReference>
<dbReference type="InterPro" id="IPR029066">
    <property type="entry name" value="PLP-binding_barrel"/>
</dbReference>
<dbReference type="NCBIfam" id="TIGR00492">
    <property type="entry name" value="alr"/>
    <property type="match status" value="1"/>
</dbReference>
<dbReference type="PANTHER" id="PTHR30511">
    <property type="entry name" value="ALANINE RACEMASE"/>
    <property type="match status" value="1"/>
</dbReference>
<dbReference type="PANTHER" id="PTHR30511:SF0">
    <property type="entry name" value="ALANINE RACEMASE, CATABOLIC-RELATED"/>
    <property type="match status" value="1"/>
</dbReference>
<dbReference type="Pfam" id="PF00842">
    <property type="entry name" value="Ala_racemase_C"/>
    <property type="match status" value="1"/>
</dbReference>
<dbReference type="Pfam" id="PF01168">
    <property type="entry name" value="Ala_racemase_N"/>
    <property type="match status" value="1"/>
</dbReference>
<dbReference type="PRINTS" id="PR00992">
    <property type="entry name" value="ALARACEMASE"/>
</dbReference>
<dbReference type="SMART" id="SM01005">
    <property type="entry name" value="Ala_racemase_C"/>
    <property type="match status" value="1"/>
</dbReference>
<dbReference type="SUPFAM" id="SSF50621">
    <property type="entry name" value="Alanine racemase C-terminal domain-like"/>
    <property type="match status" value="1"/>
</dbReference>
<dbReference type="SUPFAM" id="SSF51419">
    <property type="entry name" value="PLP-binding barrel"/>
    <property type="match status" value="1"/>
</dbReference>
<dbReference type="PROSITE" id="PS00395">
    <property type="entry name" value="ALANINE_RACEMASE"/>
    <property type="match status" value="1"/>
</dbReference>
<sequence length="378" mass="41299">MTIGNFRPATVLIDETAILHNIQHEVARLKKQTQLFAVVKADAYGHGMLRVARVAKAAGATGFCVAILDEALGLRKADYSEPVLVLGIVPSQYAAIAAAQTISLPVSSTEWLEQALPVLEAQPELPPLRIHLALDTGMGRIGFTEDQALKTAVAFVEAHPKQFVIEGVFTHFATADAPDDTYFKQQVNKFNHLVNLLPSRPRYVHVSNSATSLWHAACNGNMIRYGVAIYGLNPSGDAIPTTPFPLEPALSLESELTYCKQVHAGDGISYGVTYRAKGDEFIGTVPIGYADGWLRRLQGFHVLVDGQYCEIVGRICMDQFMIRLPKAYPAGTKVVLVGQSGDQEITLLDVAKYSKTIHYEIACNLTPRLKRQSVNPVD</sequence>
<feature type="chain" id="PRO_1000138605" description="Alanine racemase">
    <location>
        <begin position="1"/>
        <end position="378"/>
    </location>
</feature>
<feature type="active site" description="Proton acceptor; specific for D-alanine" evidence="1">
    <location>
        <position position="40"/>
    </location>
</feature>
<feature type="active site" description="Proton acceptor; specific for L-alanine" evidence="1">
    <location>
        <position position="270"/>
    </location>
</feature>
<feature type="binding site" evidence="1">
    <location>
        <position position="140"/>
    </location>
    <ligand>
        <name>substrate</name>
    </ligand>
</feature>
<feature type="binding site" evidence="1">
    <location>
        <position position="317"/>
    </location>
    <ligand>
        <name>substrate</name>
    </ligand>
</feature>
<feature type="modified residue" description="N6-(pyridoxal phosphate)lysine" evidence="1">
    <location>
        <position position="40"/>
    </location>
</feature>